<proteinExistence type="inferred from homology"/>
<gene>
    <name evidence="1" type="primary">zapD</name>
    <name type="ordered locus">c0122</name>
</gene>
<reference key="1">
    <citation type="journal article" date="2002" name="Proc. Natl. Acad. Sci. U.S.A.">
        <title>Extensive mosaic structure revealed by the complete genome sequence of uropathogenic Escherichia coli.</title>
        <authorList>
            <person name="Welch R.A."/>
            <person name="Burland V."/>
            <person name="Plunkett G. III"/>
            <person name="Redford P."/>
            <person name="Roesch P."/>
            <person name="Rasko D."/>
            <person name="Buckles E.L."/>
            <person name="Liou S.-R."/>
            <person name="Boutin A."/>
            <person name="Hackett J."/>
            <person name="Stroud D."/>
            <person name="Mayhew G.F."/>
            <person name="Rose D.J."/>
            <person name="Zhou S."/>
            <person name="Schwartz D.C."/>
            <person name="Perna N.T."/>
            <person name="Mobley H.L.T."/>
            <person name="Donnenberg M.S."/>
            <person name="Blattner F.R."/>
        </authorList>
    </citation>
    <scope>NUCLEOTIDE SEQUENCE [LARGE SCALE GENOMIC DNA]</scope>
    <source>
        <strain>CFT073 / ATCC 700928 / UPEC</strain>
    </source>
</reference>
<comment type="function">
    <text evidence="1">Cell division factor that enhances FtsZ-ring assembly. Directly interacts with FtsZ and promotes bundling of FtsZ protofilaments, with a reduction in FtsZ GTPase activity.</text>
</comment>
<comment type="subunit">
    <text evidence="1">Interacts with FtsZ.</text>
</comment>
<comment type="subcellular location">
    <subcellularLocation>
        <location evidence="1">Cytoplasm</location>
    </subcellularLocation>
    <text evidence="1">Localizes to mid-cell in an FtsZ-dependent manner.</text>
</comment>
<comment type="similarity">
    <text evidence="1">Belongs to the ZapD family.</text>
</comment>
<dbReference type="EMBL" id="AE014075">
    <property type="protein sequence ID" value="AAN78620.1"/>
    <property type="molecule type" value="Genomic_DNA"/>
</dbReference>
<dbReference type="RefSeq" id="WP_001194731.1">
    <property type="nucleotide sequence ID" value="NZ_CP051263.1"/>
</dbReference>
<dbReference type="SMR" id="Q8FL56"/>
<dbReference type="STRING" id="199310.c0122"/>
<dbReference type="KEGG" id="ecc:c0122"/>
<dbReference type="eggNOG" id="COG4582">
    <property type="taxonomic scope" value="Bacteria"/>
</dbReference>
<dbReference type="HOGENOM" id="CLU_076303_0_0_6"/>
<dbReference type="BioCyc" id="ECOL199310:C0122-MONOMER"/>
<dbReference type="Proteomes" id="UP000001410">
    <property type="component" value="Chromosome"/>
</dbReference>
<dbReference type="GO" id="GO:0032153">
    <property type="term" value="C:cell division site"/>
    <property type="evidence" value="ECO:0007669"/>
    <property type="project" value="TreeGrafter"/>
</dbReference>
<dbReference type="GO" id="GO:0005737">
    <property type="term" value="C:cytoplasm"/>
    <property type="evidence" value="ECO:0007669"/>
    <property type="project" value="UniProtKB-SubCell"/>
</dbReference>
<dbReference type="GO" id="GO:0000917">
    <property type="term" value="P:division septum assembly"/>
    <property type="evidence" value="ECO:0007669"/>
    <property type="project" value="UniProtKB-KW"/>
</dbReference>
<dbReference type="GO" id="GO:0043093">
    <property type="term" value="P:FtsZ-dependent cytokinesis"/>
    <property type="evidence" value="ECO:0007669"/>
    <property type="project" value="UniProtKB-UniRule"/>
</dbReference>
<dbReference type="FunFam" id="1.10.3900.10:FF:000001">
    <property type="entry name" value="Cell division protein ZapD"/>
    <property type="match status" value="1"/>
</dbReference>
<dbReference type="FunFam" id="2.60.440.10:FF:000001">
    <property type="entry name" value="Cell division protein ZapD"/>
    <property type="match status" value="1"/>
</dbReference>
<dbReference type="Gene3D" id="1.10.3900.10">
    <property type="entry name" value="YacF-like"/>
    <property type="match status" value="1"/>
</dbReference>
<dbReference type="Gene3D" id="2.60.440.10">
    <property type="entry name" value="YacF-like domains"/>
    <property type="match status" value="1"/>
</dbReference>
<dbReference type="HAMAP" id="MF_01092">
    <property type="entry name" value="ZapD"/>
    <property type="match status" value="1"/>
</dbReference>
<dbReference type="InterPro" id="IPR009777">
    <property type="entry name" value="ZapD"/>
</dbReference>
<dbReference type="InterPro" id="IPR027462">
    <property type="entry name" value="ZapD_C"/>
</dbReference>
<dbReference type="InterPro" id="IPR036268">
    <property type="entry name" value="ZapD_sf"/>
</dbReference>
<dbReference type="NCBIfam" id="NF003653">
    <property type="entry name" value="PRK05287.1-1"/>
    <property type="match status" value="1"/>
</dbReference>
<dbReference type="NCBIfam" id="NF003655">
    <property type="entry name" value="PRK05287.1-3"/>
    <property type="match status" value="1"/>
</dbReference>
<dbReference type="PANTHER" id="PTHR39455">
    <property type="entry name" value="CELL DIVISION PROTEIN ZAPD"/>
    <property type="match status" value="1"/>
</dbReference>
<dbReference type="PANTHER" id="PTHR39455:SF1">
    <property type="entry name" value="CELL DIVISION PROTEIN ZAPD"/>
    <property type="match status" value="1"/>
</dbReference>
<dbReference type="Pfam" id="PF07072">
    <property type="entry name" value="ZapD"/>
    <property type="match status" value="1"/>
</dbReference>
<dbReference type="SUPFAM" id="SSF160950">
    <property type="entry name" value="YacF-like"/>
    <property type="match status" value="1"/>
</dbReference>
<organism>
    <name type="scientific">Escherichia coli O6:H1 (strain CFT073 / ATCC 700928 / UPEC)</name>
    <dbReference type="NCBI Taxonomy" id="199310"/>
    <lineage>
        <taxon>Bacteria</taxon>
        <taxon>Pseudomonadati</taxon>
        <taxon>Pseudomonadota</taxon>
        <taxon>Gammaproteobacteria</taxon>
        <taxon>Enterobacterales</taxon>
        <taxon>Enterobacteriaceae</taxon>
        <taxon>Escherichia</taxon>
    </lineage>
</organism>
<accession>Q8FL56</accession>
<evidence type="ECO:0000255" key="1">
    <source>
        <dbReference type="HAMAP-Rule" id="MF_01092"/>
    </source>
</evidence>
<protein>
    <recommendedName>
        <fullName evidence="1">Cell division protein ZapD</fullName>
    </recommendedName>
    <alternativeName>
        <fullName evidence="1">Z ring-associated protein D</fullName>
    </alternativeName>
</protein>
<sequence length="247" mass="28278">MQTQVLFEHPLNEKMRTWLRIEFLIQQLTVNLPIVDHAGALHFFRNVSELLDVFERGEVRTELLKELDRQQRKLQTWIGVPGVDQSRIEALIQQLKAAGSVLISAPRIGQFLREDRLIALVRQRLSIPGGCCSFDLPTLHIWLHLPQAQRDSQVETWIASLNPLTQALTMVLDLIRQSAPFRKQTSLNGFYQDNGGDADLLRLNLSLDSQLYPQISGHKSRFAIRFMPLDSENGQVPERLDFELACC</sequence>
<keyword id="KW-0131">Cell cycle</keyword>
<keyword id="KW-0132">Cell division</keyword>
<keyword id="KW-0963">Cytoplasm</keyword>
<keyword id="KW-1185">Reference proteome</keyword>
<keyword id="KW-0717">Septation</keyword>
<feature type="chain" id="PRO_0000211668" description="Cell division protein ZapD">
    <location>
        <begin position="1"/>
        <end position="247"/>
    </location>
</feature>
<name>ZAPD_ECOL6</name>